<gene>
    <name type="primary">tuf1</name>
    <name type="ORF">SPBC9B6.04c</name>
</gene>
<proteinExistence type="inferred from homology"/>
<protein>
    <recommendedName>
        <fullName>Elongation factor Tu, mitochondrial</fullName>
    </recommendedName>
</protein>
<organism>
    <name type="scientific">Schizosaccharomyces pombe (strain 972 / ATCC 24843)</name>
    <name type="common">Fission yeast</name>
    <dbReference type="NCBI Taxonomy" id="284812"/>
    <lineage>
        <taxon>Eukaryota</taxon>
        <taxon>Fungi</taxon>
        <taxon>Dikarya</taxon>
        <taxon>Ascomycota</taxon>
        <taxon>Taphrinomycotina</taxon>
        <taxon>Schizosaccharomycetes</taxon>
        <taxon>Schizosaccharomycetales</taxon>
        <taxon>Schizosaccharomycetaceae</taxon>
        <taxon>Schizosaccharomyces</taxon>
    </lineage>
</organism>
<feature type="transit peptide" description="Mitochondrion">
    <location>
        <begin position="1"/>
        <end status="unknown"/>
    </location>
</feature>
<feature type="chain" id="PRO_0000007464" description="Elongation factor Tu, mitochondrial">
    <location>
        <begin status="unknown"/>
        <end position="439"/>
    </location>
</feature>
<feature type="domain" description="tr-type G">
    <location>
        <begin position="51"/>
        <end position="246"/>
    </location>
</feature>
<feature type="region of interest" description="G1" evidence="1">
    <location>
        <begin position="60"/>
        <end position="67"/>
    </location>
</feature>
<feature type="region of interest" description="G2" evidence="1">
    <location>
        <begin position="101"/>
        <end position="105"/>
    </location>
</feature>
<feature type="region of interest" description="G3" evidence="1">
    <location>
        <begin position="122"/>
        <end position="125"/>
    </location>
</feature>
<feature type="region of interest" description="G4" evidence="1">
    <location>
        <begin position="177"/>
        <end position="180"/>
    </location>
</feature>
<feature type="region of interest" description="G5" evidence="1">
    <location>
        <begin position="214"/>
        <end position="216"/>
    </location>
</feature>
<feature type="binding site" evidence="1">
    <location>
        <begin position="60"/>
        <end position="67"/>
    </location>
    <ligand>
        <name>GTP</name>
        <dbReference type="ChEBI" id="CHEBI:37565"/>
    </ligand>
</feature>
<feature type="binding site" evidence="1">
    <location>
        <begin position="122"/>
        <end position="126"/>
    </location>
    <ligand>
        <name>GTP</name>
        <dbReference type="ChEBI" id="CHEBI:37565"/>
    </ligand>
</feature>
<feature type="binding site" evidence="1">
    <location>
        <begin position="177"/>
        <end position="180"/>
    </location>
    <ligand>
        <name>GTP</name>
        <dbReference type="ChEBI" id="CHEBI:37565"/>
    </ligand>
</feature>
<reference key="1">
    <citation type="journal article" date="2002" name="Nature">
        <title>The genome sequence of Schizosaccharomyces pombe.</title>
        <authorList>
            <person name="Wood V."/>
            <person name="Gwilliam R."/>
            <person name="Rajandream M.A."/>
            <person name="Lyne M.H."/>
            <person name="Lyne R."/>
            <person name="Stewart A."/>
            <person name="Sgouros J.G."/>
            <person name="Peat N."/>
            <person name="Hayles J."/>
            <person name="Baker S.G."/>
            <person name="Basham D."/>
            <person name="Bowman S."/>
            <person name="Brooks K."/>
            <person name="Brown D."/>
            <person name="Brown S."/>
            <person name="Chillingworth T."/>
            <person name="Churcher C.M."/>
            <person name="Collins M."/>
            <person name="Connor R."/>
            <person name="Cronin A."/>
            <person name="Davis P."/>
            <person name="Feltwell T."/>
            <person name="Fraser A."/>
            <person name="Gentles S."/>
            <person name="Goble A."/>
            <person name="Hamlin N."/>
            <person name="Harris D.E."/>
            <person name="Hidalgo J."/>
            <person name="Hodgson G."/>
            <person name="Holroyd S."/>
            <person name="Hornsby T."/>
            <person name="Howarth S."/>
            <person name="Huckle E.J."/>
            <person name="Hunt S."/>
            <person name="Jagels K."/>
            <person name="James K.D."/>
            <person name="Jones L."/>
            <person name="Jones M."/>
            <person name="Leather S."/>
            <person name="McDonald S."/>
            <person name="McLean J."/>
            <person name="Mooney P."/>
            <person name="Moule S."/>
            <person name="Mungall K.L."/>
            <person name="Murphy L.D."/>
            <person name="Niblett D."/>
            <person name="Odell C."/>
            <person name="Oliver K."/>
            <person name="O'Neil S."/>
            <person name="Pearson D."/>
            <person name="Quail M.A."/>
            <person name="Rabbinowitsch E."/>
            <person name="Rutherford K.M."/>
            <person name="Rutter S."/>
            <person name="Saunders D."/>
            <person name="Seeger K."/>
            <person name="Sharp S."/>
            <person name="Skelton J."/>
            <person name="Simmonds M.N."/>
            <person name="Squares R."/>
            <person name="Squares S."/>
            <person name="Stevens K."/>
            <person name="Taylor K."/>
            <person name="Taylor R.G."/>
            <person name="Tivey A."/>
            <person name="Walsh S.V."/>
            <person name="Warren T."/>
            <person name="Whitehead S."/>
            <person name="Woodward J.R."/>
            <person name="Volckaert G."/>
            <person name="Aert R."/>
            <person name="Robben J."/>
            <person name="Grymonprez B."/>
            <person name="Weltjens I."/>
            <person name="Vanstreels E."/>
            <person name="Rieger M."/>
            <person name="Schaefer M."/>
            <person name="Mueller-Auer S."/>
            <person name="Gabel C."/>
            <person name="Fuchs M."/>
            <person name="Duesterhoeft A."/>
            <person name="Fritzc C."/>
            <person name="Holzer E."/>
            <person name="Moestl D."/>
            <person name="Hilbert H."/>
            <person name="Borzym K."/>
            <person name="Langer I."/>
            <person name="Beck A."/>
            <person name="Lehrach H."/>
            <person name="Reinhardt R."/>
            <person name="Pohl T.M."/>
            <person name="Eger P."/>
            <person name="Zimmermann W."/>
            <person name="Wedler H."/>
            <person name="Wambutt R."/>
            <person name="Purnelle B."/>
            <person name="Goffeau A."/>
            <person name="Cadieu E."/>
            <person name="Dreano S."/>
            <person name="Gloux S."/>
            <person name="Lelaure V."/>
            <person name="Mottier S."/>
            <person name="Galibert F."/>
            <person name="Aves S.J."/>
            <person name="Xiang Z."/>
            <person name="Hunt C."/>
            <person name="Moore K."/>
            <person name="Hurst S.M."/>
            <person name="Lucas M."/>
            <person name="Rochet M."/>
            <person name="Gaillardin C."/>
            <person name="Tallada V.A."/>
            <person name="Garzon A."/>
            <person name="Thode G."/>
            <person name="Daga R.R."/>
            <person name="Cruzado L."/>
            <person name="Jimenez J."/>
            <person name="Sanchez M."/>
            <person name="del Rey F."/>
            <person name="Benito J."/>
            <person name="Dominguez A."/>
            <person name="Revuelta J.L."/>
            <person name="Moreno S."/>
            <person name="Armstrong J."/>
            <person name="Forsburg S.L."/>
            <person name="Cerutti L."/>
            <person name="Lowe T."/>
            <person name="McCombie W.R."/>
            <person name="Paulsen I."/>
            <person name="Potashkin J."/>
            <person name="Shpakovski G.V."/>
            <person name="Ussery D."/>
            <person name="Barrell B.G."/>
            <person name="Nurse P."/>
        </authorList>
    </citation>
    <scope>NUCLEOTIDE SEQUENCE [LARGE SCALE GENOMIC DNA]</scope>
    <source>
        <strain>972 / ATCC 24843</strain>
    </source>
</reference>
<accession>Q9Y700</accession>
<keyword id="KW-0251">Elongation factor</keyword>
<keyword id="KW-0342">GTP-binding</keyword>
<keyword id="KW-0496">Mitochondrion</keyword>
<keyword id="KW-0547">Nucleotide-binding</keyword>
<keyword id="KW-0648">Protein biosynthesis</keyword>
<keyword id="KW-1185">Reference proteome</keyword>
<keyword id="KW-0809">Transit peptide</keyword>
<comment type="function">
    <text evidence="1">This protein promotes the GTP-dependent binding of aminoacyl-tRNA to the A-site of ribosomes during protein biosynthesis.</text>
</comment>
<comment type="subcellular location">
    <subcellularLocation>
        <location evidence="1">Mitochondrion</location>
    </subcellularLocation>
</comment>
<comment type="similarity">
    <text evidence="2">Belongs to the TRAFAC class translation factor GTPase superfamily. Classic translation factor GTPase family. EF-Tu/EF-1A subfamily.</text>
</comment>
<dbReference type="EMBL" id="CU329671">
    <property type="protein sequence ID" value="CAB42365.1"/>
    <property type="molecule type" value="Genomic_DNA"/>
</dbReference>
<dbReference type="PIR" id="T40785">
    <property type="entry name" value="T40785"/>
</dbReference>
<dbReference type="RefSeq" id="NP_595746.1">
    <property type="nucleotide sequence ID" value="NM_001021646.2"/>
</dbReference>
<dbReference type="SMR" id="Q9Y700"/>
<dbReference type="BioGRID" id="276743">
    <property type="interactions" value="5"/>
</dbReference>
<dbReference type="FunCoup" id="Q9Y700">
    <property type="interactions" value="574"/>
</dbReference>
<dbReference type="STRING" id="284812.Q9Y700"/>
<dbReference type="PaxDb" id="4896-SPBC9B6.04c.1"/>
<dbReference type="EnsemblFungi" id="SPBC9B6.04c.1">
    <property type="protein sequence ID" value="SPBC9B6.04c.1:pep"/>
    <property type="gene ID" value="SPBC9B6.04c"/>
</dbReference>
<dbReference type="GeneID" id="2540210"/>
<dbReference type="KEGG" id="spo:2540210"/>
<dbReference type="PomBase" id="SPBC9B6.04c">
    <property type="gene designation" value="tuf1"/>
</dbReference>
<dbReference type="VEuPathDB" id="FungiDB:SPBC9B6.04c"/>
<dbReference type="eggNOG" id="KOG0460">
    <property type="taxonomic scope" value="Eukaryota"/>
</dbReference>
<dbReference type="HOGENOM" id="CLU_007265_0_0_1"/>
<dbReference type="InParanoid" id="Q9Y700"/>
<dbReference type="OMA" id="EGDKEWG"/>
<dbReference type="PhylomeDB" id="Q9Y700"/>
<dbReference type="PRO" id="PR:Q9Y700"/>
<dbReference type="Proteomes" id="UP000002485">
    <property type="component" value="Chromosome II"/>
</dbReference>
<dbReference type="GO" id="GO:0005759">
    <property type="term" value="C:mitochondrial matrix"/>
    <property type="evidence" value="ECO:0000250"/>
    <property type="project" value="PomBase"/>
</dbReference>
<dbReference type="GO" id="GO:0005739">
    <property type="term" value="C:mitochondrion"/>
    <property type="evidence" value="ECO:0007005"/>
    <property type="project" value="PomBase"/>
</dbReference>
<dbReference type="GO" id="GO:0005525">
    <property type="term" value="F:GTP binding"/>
    <property type="evidence" value="ECO:0000250"/>
    <property type="project" value="PomBase"/>
</dbReference>
<dbReference type="GO" id="GO:0003924">
    <property type="term" value="F:GTPase activity"/>
    <property type="evidence" value="ECO:0000266"/>
    <property type="project" value="PomBase"/>
</dbReference>
<dbReference type="GO" id="GO:0003746">
    <property type="term" value="F:translation elongation factor activity"/>
    <property type="evidence" value="ECO:0000269"/>
    <property type="project" value="PomBase"/>
</dbReference>
<dbReference type="GO" id="GO:0000049">
    <property type="term" value="F:tRNA binding"/>
    <property type="evidence" value="ECO:0000250"/>
    <property type="project" value="PomBase"/>
</dbReference>
<dbReference type="GO" id="GO:0032543">
    <property type="term" value="P:mitochondrial translation"/>
    <property type="evidence" value="ECO:0000269"/>
    <property type="project" value="PomBase"/>
</dbReference>
<dbReference type="GO" id="GO:0070125">
    <property type="term" value="P:mitochondrial translational elongation"/>
    <property type="evidence" value="ECO:0000318"/>
    <property type="project" value="GO_Central"/>
</dbReference>
<dbReference type="CDD" id="cd01884">
    <property type="entry name" value="EF_Tu"/>
    <property type="match status" value="1"/>
</dbReference>
<dbReference type="CDD" id="cd03697">
    <property type="entry name" value="EFTU_II"/>
    <property type="match status" value="1"/>
</dbReference>
<dbReference type="CDD" id="cd03707">
    <property type="entry name" value="EFTU_III"/>
    <property type="match status" value="1"/>
</dbReference>
<dbReference type="FunFam" id="2.40.30.10:FF:000001">
    <property type="entry name" value="Elongation factor Tu"/>
    <property type="match status" value="1"/>
</dbReference>
<dbReference type="FunFam" id="3.40.50.300:FF:000003">
    <property type="entry name" value="Elongation factor Tu"/>
    <property type="match status" value="1"/>
</dbReference>
<dbReference type="Gene3D" id="3.40.50.300">
    <property type="entry name" value="P-loop containing nucleotide triphosphate hydrolases"/>
    <property type="match status" value="1"/>
</dbReference>
<dbReference type="Gene3D" id="2.40.30.10">
    <property type="entry name" value="Translation factors"/>
    <property type="match status" value="2"/>
</dbReference>
<dbReference type="HAMAP" id="MF_00118_B">
    <property type="entry name" value="EF_Tu_B"/>
    <property type="match status" value="1"/>
</dbReference>
<dbReference type="InterPro" id="IPR041709">
    <property type="entry name" value="EF-Tu_GTP-bd"/>
</dbReference>
<dbReference type="InterPro" id="IPR050055">
    <property type="entry name" value="EF-Tu_GTPase"/>
</dbReference>
<dbReference type="InterPro" id="IPR004161">
    <property type="entry name" value="EFTu-like_2"/>
</dbReference>
<dbReference type="InterPro" id="IPR033720">
    <property type="entry name" value="EFTU_2"/>
</dbReference>
<dbReference type="InterPro" id="IPR031157">
    <property type="entry name" value="G_TR_CS"/>
</dbReference>
<dbReference type="InterPro" id="IPR027417">
    <property type="entry name" value="P-loop_NTPase"/>
</dbReference>
<dbReference type="InterPro" id="IPR005225">
    <property type="entry name" value="Small_GTP-bd"/>
</dbReference>
<dbReference type="InterPro" id="IPR000795">
    <property type="entry name" value="T_Tr_GTP-bd_dom"/>
</dbReference>
<dbReference type="InterPro" id="IPR009000">
    <property type="entry name" value="Transl_B-barrel_sf"/>
</dbReference>
<dbReference type="InterPro" id="IPR009001">
    <property type="entry name" value="Transl_elong_EF1A/Init_IF2_C"/>
</dbReference>
<dbReference type="InterPro" id="IPR004541">
    <property type="entry name" value="Transl_elong_EFTu/EF1A_bac/org"/>
</dbReference>
<dbReference type="InterPro" id="IPR004160">
    <property type="entry name" value="Transl_elong_EFTu/EF1A_C"/>
</dbReference>
<dbReference type="NCBIfam" id="TIGR00485">
    <property type="entry name" value="EF-Tu"/>
    <property type="match status" value="1"/>
</dbReference>
<dbReference type="NCBIfam" id="NF000766">
    <property type="entry name" value="PRK00049.1"/>
    <property type="match status" value="1"/>
</dbReference>
<dbReference type="NCBIfam" id="NF009372">
    <property type="entry name" value="PRK12735.1"/>
    <property type="match status" value="1"/>
</dbReference>
<dbReference type="NCBIfam" id="NF009373">
    <property type="entry name" value="PRK12736.1"/>
    <property type="match status" value="1"/>
</dbReference>
<dbReference type="NCBIfam" id="TIGR00231">
    <property type="entry name" value="small_GTP"/>
    <property type="match status" value="1"/>
</dbReference>
<dbReference type="PANTHER" id="PTHR43721:SF36">
    <property type="entry name" value="ELONGATION FACTOR TU, MITOCHONDRIAL"/>
    <property type="match status" value="1"/>
</dbReference>
<dbReference type="PANTHER" id="PTHR43721">
    <property type="entry name" value="ELONGATION FACTOR TU-RELATED"/>
    <property type="match status" value="1"/>
</dbReference>
<dbReference type="Pfam" id="PF00009">
    <property type="entry name" value="GTP_EFTU"/>
    <property type="match status" value="1"/>
</dbReference>
<dbReference type="Pfam" id="PF03144">
    <property type="entry name" value="GTP_EFTU_D2"/>
    <property type="match status" value="1"/>
</dbReference>
<dbReference type="Pfam" id="PF03143">
    <property type="entry name" value="GTP_EFTU_D3"/>
    <property type="match status" value="1"/>
</dbReference>
<dbReference type="PRINTS" id="PR00315">
    <property type="entry name" value="ELONGATNFCT"/>
</dbReference>
<dbReference type="SUPFAM" id="SSF50465">
    <property type="entry name" value="EF-Tu/eEF-1alpha/eIF2-gamma C-terminal domain"/>
    <property type="match status" value="1"/>
</dbReference>
<dbReference type="SUPFAM" id="SSF52540">
    <property type="entry name" value="P-loop containing nucleoside triphosphate hydrolases"/>
    <property type="match status" value="1"/>
</dbReference>
<dbReference type="SUPFAM" id="SSF50447">
    <property type="entry name" value="Translation proteins"/>
    <property type="match status" value="1"/>
</dbReference>
<dbReference type="PROSITE" id="PS00301">
    <property type="entry name" value="G_TR_1"/>
    <property type="match status" value="1"/>
</dbReference>
<dbReference type="PROSITE" id="PS51722">
    <property type="entry name" value="G_TR_2"/>
    <property type="match status" value="1"/>
</dbReference>
<sequence>MNSAKATSLLFQGFRKNCLRLNRISFASGLINRFTVPARTYADEKVFVRKKPHVNIGTIGHVDHGKTTLTAAITKCLSDLGQASFMDYSQIDKAPEEKARGITISSAHVEYETANRHYAHVDCPGHADYIKNMITGAATMDGAIIVVSATDGQMPQTREHLLLARQVGVKQIVVYINKVDMVEPDMIELVEMEMRELLSEYGFDGDNTPIVSGSALCALEGREPEIGLNSITKLMEAVDSYITLPERKTDVPFLMAIEDVFSISGRGTVVTGRVERGTLKKGAEIEIVGYGSHLKTTVTGIEMFKKQLDAAVAGDNCGLLLRSIKREQLKRGMIVAQPGTVAPHQKFKASFYILTKEEGGRRTGFVDKYRPQLYSRTSDVTVELTHPDPNDSDKMVMPGDNVEMICTLIHPIVIEKGQRFTVREGGSTVGTALVTELLD</sequence>
<name>EFTU_SCHPO</name>
<evidence type="ECO:0000250" key="1"/>
<evidence type="ECO:0000305" key="2"/>